<protein>
    <recommendedName>
        <fullName evidence="1">tRNA uridine(34) hydroxylase</fullName>
        <ecNumber evidence="1">1.14.-.-</ecNumber>
    </recommendedName>
    <alternativeName>
        <fullName evidence="1">tRNA hydroxylation protein O</fullName>
    </alternativeName>
</protein>
<sequence length="312" mass="35528">MTDKIVVAALYKFVSLPDYQALREPLLQTLLDNGIKGTLLLAEEGINGTVSGSRAAIDALLAWFRQDARLADIDHKESYCDEQPFYRTKVKLKKEIVTLGVPGVDPNQRVGTYVEPQDWNALISDPEVLLIDTRNDYEVAIGTFEGAIDPKTKSFREFPEYVKAHFDPSKHKKVAMFCTGGIRCEKASSYMLGEGFEEVYHLKGGILKYLEEVPQEQTKWRGDCFVFDNRVTVRHDLSEGDYDQCHACRNPISVEDRQSEYYSPGVSCPHCWDSLPEKTRESARERQKQIELARARNQPHPIGRDPRQLNEA</sequence>
<evidence type="ECO:0000255" key="1">
    <source>
        <dbReference type="HAMAP-Rule" id="MF_00469"/>
    </source>
</evidence>
<evidence type="ECO:0000256" key="2">
    <source>
        <dbReference type="SAM" id="MobiDB-lite"/>
    </source>
</evidence>
<dbReference type="EC" id="1.14.-.-" evidence="1"/>
<dbReference type="EMBL" id="CP000680">
    <property type="protein sequence ID" value="ABP84457.1"/>
    <property type="molecule type" value="Genomic_DNA"/>
</dbReference>
<dbReference type="SMR" id="A4XSZ1"/>
<dbReference type="STRING" id="399739.Pmen_1693"/>
<dbReference type="KEGG" id="pmy:Pmen_1693"/>
<dbReference type="PATRIC" id="fig|399739.8.peg.1716"/>
<dbReference type="eggNOG" id="COG1054">
    <property type="taxonomic scope" value="Bacteria"/>
</dbReference>
<dbReference type="HOGENOM" id="CLU_038878_0_0_6"/>
<dbReference type="OrthoDB" id="9778326at2"/>
<dbReference type="GO" id="GO:0016705">
    <property type="term" value="F:oxidoreductase activity, acting on paired donors, with incorporation or reduction of molecular oxygen"/>
    <property type="evidence" value="ECO:0007669"/>
    <property type="project" value="UniProtKB-UniRule"/>
</dbReference>
<dbReference type="GO" id="GO:0006400">
    <property type="term" value="P:tRNA modification"/>
    <property type="evidence" value="ECO:0007669"/>
    <property type="project" value="UniProtKB-UniRule"/>
</dbReference>
<dbReference type="CDD" id="cd01518">
    <property type="entry name" value="RHOD_YceA"/>
    <property type="match status" value="1"/>
</dbReference>
<dbReference type="Gene3D" id="3.30.70.100">
    <property type="match status" value="1"/>
</dbReference>
<dbReference type="Gene3D" id="3.40.250.10">
    <property type="entry name" value="Rhodanese-like domain"/>
    <property type="match status" value="1"/>
</dbReference>
<dbReference type="HAMAP" id="MF_00469">
    <property type="entry name" value="TrhO"/>
    <property type="match status" value="1"/>
</dbReference>
<dbReference type="InterPro" id="IPR001763">
    <property type="entry name" value="Rhodanese-like_dom"/>
</dbReference>
<dbReference type="InterPro" id="IPR036873">
    <property type="entry name" value="Rhodanese-like_dom_sf"/>
</dbReference>
<dbReference type="InterPro" id="IPR020936">
    <property type="entry name" value="TrhO"/>
</dbReference>
<dbReference type="InterPro" id="IPR040503">
    <property type="entry name" value="TRHO_N"/>
</dbReference>
<dbReference type="NCBIfam" id="NF001136">
    <property type="entry name" value="PRK00142.1-4"/>
    <property type="match status" value="1"/>
</dbReference>
<dbReference type="PANTHER" id="PTHR43268:SF3">
    <property type="entry name" value="RHODANESE-LIKE DOMAIN-CONTAINING PROTEIN 7-RELATED"/>
    <property type="match status" value="1"/>
</dbReference>
<dbReference type="PANTHER" id="PTHR43268">
    <property type="entry name" value="THIOSULFATE SULFURTRANSFERASE/RHODANESE-LIKE DOMAIN-CONTAINING PROTEIN 2"/>
    <property type="match status" value="1"/>
</dbReference>
<dbReference type="Pfam" id="PF00581">
    <property type="entry name" value="Rhodanese"/>
    <property type="match status" value="1"/>
</dbReference>
<dbReference type="Pfam" id="PF17773">
    <property type="entry name" value="UPF0176_N"/>
    <property type="match status" value="1"/>
</dbReference>
<dbReference type="SMART" id="SM00450">
    <property type="entry name" value="RHOD"/>
    <property type="match status" value="1"/>
</dbReference>
<dbReference type="SUPFAM" id="SSF52821">
    <property type="entry name" value="Rhodanese/Cell cycle control phosphatase"/>
    <property type="match status" value="1"/>
</dbReference>
<dbReference type="PROSITE" id="PS50206">
    <property type="entry name" value="RHODANESE_3"/>
    <property type="match status" value="1"/>
</dbReference>
<name>TRHO_ECTM1</name>
<reference key="1">
    <citation type="submission" date="2007-04" db="EMBL/GenBank/DDBJ databases">
        <title>Complete sequence of Pseudomonas mendocina ymp.</title>
        <authorList>
            <consortium name="US DOE Joint Genome Institute"/>
            <person name="Copeland A."/>
            <person name="Lucas S."/>
            <person name="Lapidus A."/>
            <person name="Barry K."/>
            <person name="Glavina del Rio T."/>
            <person name="Dalin E."/>
            <person name="Tice H."/>
            <person name="Pitluck S."/>
            <person name="Kiss H."/>
            <person name="Brettin T."/>
            <person name="Detter J.C."/>
            <person name="Bruce D."/>
            <person name="Han C."/>
            <person name="Schmutz J."/>
            <person name="Larimer F."/>
            <person name="Land M."/>
            <person name="Hauser L."/>
            <person name="Kyrpides N."/>
            <person name="Mikhailova N."/>
            <person name="Hersman L."/>
            <person name="Dubois J."/>
            <person name="Maurice P."/>
            <person name="Richardson P."/>
        </authorList>
    </citation>
    <scope>NUCLEOTIDE SEQUENCE [LARGE SCALE GENOMIC DNA]</scope>
    <source>
        <strain>ymp</strain>
    </source>
</reference>
<gene>
    <name evidence="1" type="primary">trhO</name>
    <name type="ordered locus">Pmen_1693</name>
</gene>
<feature type="chain" id="PRO_1000060371" description="tRNA uridine(34) hydroxylase">
    <location>
        <begin position="1"/>
        <end position="312"/>
    </location>
</feature>
<feature type="domain" description="Rhodanese" evidence="1">
    <location>
        <begin position="124"/>
        <end position="218"/>
    </location>
</feature>
<feature type="region of interest" description="Disordered" evidence="2">
    <location>
        <begin position="279"/>
        <end position="312"/>
    </location>
</feature>
<feature type="compositionally biased region" description="Basic and acidic residues" evidence="2">
    <location>
        <begin position="279"/>
        <end position="294"/>
    </location>
</feature>
<feature type="compositionally biased region" description="Basic and acidic residues" evidence="2">
    <location>
        <begin position="302"/>
        <end position="312"/>
    </location>
</feature>
<feature type="active site" description="Cysteine persulfide intermediate" evidence="1">
    <location>
        <position position="178"/>
    </location>
</feature>
<comment type="function">
    <text evidence="1">Catalyzes oxygen-dependent 5-hydroxyuridine (ho5U) modification at position 34 in tRNAs.</text>
</comment>
<comment type="catalytic activity">
    <reaction evidence="1">
        <text>uridine(34) in tRNA + AH2 + O2 = 5-hydroxyuridine(34) in tRNA + A + H2O</text>
        <dbReference type="Rhea" id="RHEA:64224"/>
        <dbReference type="Rhea" id="RHEA-COMP:11727"/>
        <dbReference type="Rhea" id="RHEA-COMP:13381"/>
        <dbReference type="ChEBI" id="CHEBI:13193"/>
        <dbReference type="ChEBI" id="CHEBI:15377"/>
        <dbReference type="ChEBI" id="CHEBI:15379"/>
        <dbReference type="ChEBI" id="CHEBI:17499"/>
        <dbReference type="ChEBI" id="CHEBI:65315"/>
        <dbReference type="ChEBI" id="CHEBI:136877"/>
    </reaction>
</comment>
<comment type="similarity">
    <text evidence="1">Belongs to the TrhO family.</text>
</comment>
<keyword id="KW-0560">Oxidoreductase</keyword>
<keyword id="KW-0819">tRNA processing</keyword>
<proteinExistence type="inferred from homology"/>
<accession>A4XSZ1</accession>
<organism>
    <name type="scientific">Ectopseudomonas mendocina (strain ymp)</name>
    <name type="common">Pseudomonas mendocina</name>
    <dbReference type="NCBI Taxonomy" id="399739"/>
    <lineage>
        <taxon>Bacteria</taxon>
        <taxon>Pseudomonadati</taxon>
        <taxon>Pseudomonadota</taxon>
        <taxon>Gammaproteobacteria</taxon>
        <taxon>Pseudomonadales</taxon>
        <taxon>Pseudomonadaceae</taxon>
        <taxon>Ectopseudomonas</taxon>
    </lineage>
</organism>